<organism>
    <name type="scientific">Dictyoglomus thermophilum (strain ATCC 35947 / DSM 3960 / H-6-12)</name>
    <dbReference type="NCBI Taxonomy" id="309799"/>
    <lineage>
        <taxon>Bacteria</taxon>
        <taxon>Pseudomonadati</taxon>
        <taxon>Dictyoglomota</taxon>
        <taxon>Dictyoglomia</taxon>
        <taxon>Dictyoglomales</taxon>
        <taxon>Dictyoglomaceae</taxon>
        <taxon>Dictyoglomus</taxon>
    </lineage>
</organism>
<dbReference type="EC" id="2.4.2.17" evidence="1"/>
<dbReference type="EMBL" id="CP001146">
    <property type="protein sequence ID" value="ACI19176.1"/>
    <property type="molecule type" value="Genomic_DNA"/>
</dbReference>
<dbReference type="RefSeq" id="WP_012547808.1">
    <property type="nucleotide sequence ID" value="NC_011297.1"/>
</dbReference>
<dbReference type="SMR" id="B5YE84"/>
<dbReference type="STRING" id="309799.DICTH_0992"/>
<dbReference type="PaxDb" id="309799-DICTH_0992"/>
<dbReference type="KEGG" id="dth:DICTH_0992"/>
<dbReference type="eggNOG" id="COG0040">
    <property type="taxonomic scope" value="Bacteria"/>
</dbReference>
<dbReference type="HOGENOM" id="CLU_038115_2_0_0"/>
<dbReference type="OrthoDB" id="9801867at2"/>
<dbReference type="UniPathway" id="UPA00031">
    <property type="reaction ID" value="UER00006"/>
</dbReference>
<dbReference type="Proteomes" id="UP000001733">
    <property type="component" value="Chromosome"/>
</dbReference>
<dbReference type="GO" id="GO:0005737">
    <property type="term" value="C:cytoplasm"/>
    <property type="evidence" value="ECO:0007669"/>
    <property type="project" value="UniProtKB-SubCell"/>
</dbReference>
<dbReference type="GO" id="GO:0005524">
    <property type="term" value="F:ATP binding"/>
    <property type="evidence" value="ECO:0007669"/>
    <property type="project" value="UniProtKB-KW"/>
</dbReference>
<dbReference type="GO" id="GO:0003879">
    <property type="term" value="F:ATP phosphoribosyltransferase activity"/>
    <property type="evidence" value="ECO:0007669"/>
    <property type="project" value="UniProtKB-UniRule"/>
</dbReference>
<dbReference type="GO" id="GO:0000105">
    <property type="term" value="P:L-histidine biosynthetic process"/>
    <property type="evidence" value="ECO:0007669"/>
    <property type="project" value="UniProtKB-UniRule"/>
</dbReference>
<dbReference type="CDD" id="cd13595">
    <property type="entry name" value="PBP2_HisGs"/>
    <property type="match status" value="1"/>
</dbReference>
<dbReference type="FunFam" id="3.40.190.10:FF:000008">
    <property type="entry name" value="ATP phosphoribosyltransferase"/>
    <property type="match status" value="1"/>
</dbReference>
<dbReference type="Gene3D" id="3.40.190.10">
    <property type="entry name" value="Periplasmic binding protein-like II"/>
    <property type="match status" value="2"/>
</dbReference>
<dbReference type="HAMAP" id="MF_01018">
    <property type="entry name" value="HisG_Short"/>
    <property type="match status" value="1"/>
</dbReference>
<dbReference type="InterPro" id="IPR013820">
    <property type="entry name" value="ATP_PRibTrfase_cat"/>
</dbReference>
<dbReference type="InterPro" id="IPR018198">
    <property type="entry name" value="ATP_PRibTrfase_CS"/>
</dbReference>
<dbReference type="InterPro" id="IPR001348">
    <property type="entry name" value="ATP_PRibTrfase_HisG"/>
</dbReference>
<dbReference type="InterPro" id="IPR024893">
    <property type="entry name" value="ATP_PRibTrfase_HisG_short"/>
</dbReference>
<dbReference type="NCBIfam" id="TIGR00070">
    <property type="entry name" value="hisG"/>
    <property type="match status" value="1"/>
</dbReference>
<dbReference type="PANTHER" id="PTHR21403:SF8">
    <property type="entry name" value="ATP PHOSPHORIBOSYLTRANSFERASE"/>
    <property type="match status" value="1"/>
</dbReference>
<dbReference type="PANTHER" id="PTHR21403">
    <property type="entry name" value="ATP PHOSPHORIBOSYLTRANSFERASE ATP-PRTASE"/>
    <property type="match status" value="1"/>
</dbReference>
<dbReference type="Pfam" id="PF01634">
    <property type="entry name" value="HisG"/>
    <property type="match status" value="1"/>
</dbReference>
<dbReference type="SUPFAM" id="SSF53850">
    <property type="entry name" value="Periplasmic binding protein-like II"/>
    <property type="match status" value="1"/>
</dbReference>
<dbReference type="PROSITE" id="PS01316">
    <property type="entry name" value="ATP_P_PHORIBOSYLTR"/>
    <property type="match status" value="1"/>
</dbReference>
<gene>
    <name evidence="1" type="primary">hisG</name>
    <name type="ordered locus">DICTH_0992</name>
</gene>
<comment type="function">
    <text evidence="1">Catalyzes the condensation of ATP and 5-phosphoribose 1-diphosphate to form N'-(5'-phosphoribosyl)-ATP (PR-ATP). Has a crucial role in the pathway because the rate of histidine biosynthesis seems to be controlled primarily by regulation of HisG enzymatic activity.</text>
</comment>
<comment type="catalytic activity">
    <reaction evidence="1">
        <text>1-(5-phospho-beta-D-ribosyl)-ATP + diphosphate = 5-phospho-alpha-D-ribose 1-diphosphate + ATP</text>
        <dbReference type="Rhea" id="RHEA:18473"/>
        <dbReference type="ChEBI" id="CHEBI:30616"/>
        <dbReference type="ChEBI" id="CHEBI:33019"/>
        <dbReference type="ChEBI" id="CHEBI:58017"/>
        <dbReference type="ChEBI" id="CHEBI:73183"/>
        <dbReference type="EC" id="2.4.2.17"/>
    </reaction>
</comment>
<comment type="pathway">
    <text evidence="1">Amino-acid biosynthesis; L-histidine biosynthesis; L-histidine from 5-phospho-alpha-D-ribose 1-diphosphate: step 1/9.</text>
</comment>
<comment type="subunit">
    <text evidence="1">Heteromultimer composed of HisG and HisZ subunits.</text>
</comment>
<comment type="subcellular location">
    <subcellularLocation>
        <location evidence="1">Cytoplasm</location>
    </subcellularLocation>
</comment>
<comment type="domain">
    <text>Lacks the C-terminal regulatory region which is replaced by HisZ.</text>
</comment>
<comment type="similarity">
    <text evidence="1">Belongs to the ATP phosphoribosyltransferase family. Short subfamily.</text>
</comment>
<feature type="chain" id="PRO_1000135279" description="ATP phosphoribosyltransferase">
    <location>
        <begin position="1"/>
        <end position="207"/>
    </location>
</feature>
<sequence>MIRIAIPTGRMLEQTLDFLRNFDKKLLDEEKGRKLRIRGERFEVFLAKPWDLPLYVEERVVDLGIIGRDVILEQERNLVNLLSLPFGYCKMVIAGYPHISLEKNGKEIKIATKYENIARKFLEDKWSKIKVIKLNGSVELGPILNISDFIVDIVETGKTLKENGLEIKEVLFESSACLVSNVASFVYLRDEILSFVKEVRKLNDKCN</sequence>
<name>HIS1_DICT6</name>
<protein>
    <recommendedName>
        <fullName evidence="1">ATP phosphoribosyltransferase</fullName>
        <shortName evidence="1">ATP-PRT</shortName>
        <shortName evidence="1">ATP-PRTase</shortName>
        <ecNumber evidence="1">2.4.2.17</ecNumber>
    </recommendedName>
</protein>
<reference key="1">
    <citation type="journal article" date="2014" name="Genome Announc.">
        <title>Complete Genome Sequence of the Extreme Thermophile Dictyoglomus thermophilum H-6-12.</title>
        <authorList>
            <person name="Coil D.A."/>
            <person name="Badger J.H."/>
            <person name="Forberger H.C."/>
            <person name="Riggs F."/>
            <person name="Madupu R."/>
            <person name="Fedorova N."/>
            <person name="Ward N."/>
            <person name="Robb F.T."/>
            <person name="Eisen J.A."/>
        </authorList>
    </citation>
    <scope>NUCLEOTIDE SEQUENCE [LARGE SCALE GENOMIC DNA]</scope>
    <source>
        <strain>ATCC 35947 / DSM 3960 / H-6-12</strain>
    </source>
</reference>
<proteinExistence type="inferred from homology"/>
<keyword id="KW-0028">Amino-acid biosynthesis</keyword>
<keyword id="KW-0067">ATP-binding</keyword>
<keyword id="KW-0963">Cytoplasm</keyword>
<keyword id="KW-0328">Glycosyltransferase</keyword>
<keyword id="KW-0368">Histidine biosynthesis</keyword>
<keyword id="KW-0547">Nucleotide-binding</keyword>
<keyword id="KW-0808">Transferase</keyword>
<evidence type="ECO:0000255" key="1">
    <source>
        <dbReference type="HAMAP-Rule" id="MF_01018"/>
    </source>
</evidence>
<accession>B5YE84</accession>